<dbReference type="EMBL" id="CP000301">
    <property type="protein sequence ID" value="ABD88982.1"/>
    <property type="molecule type" value="Genomic_DNA"/>
</dbReference>
<dbReference type="SMR" id="Q211F4"/>
<dbReference type="STRING" id="316056.RPC_3442"/>
<dbReference type="KEGG" id="rpc:RPC_3442"/>
<dbReference type="eggNOG" id="COG0092">
    <property type="taxonomic scope" value="Bacteria"/>
</dbReference>
<dbReference type="HOGENOM" id="CLU_058591_0_2_5"/>
<dbReference type="OrthoDB" id="9806396at2"/>
<dbReference type="GO" id="GO:0022627">
    <property type="term" value="C:cytosolic small ribosomal subunit"/>
    <property type="evidence" value="ECO:0007669"/>
    <property type="project" value="TreeGrafter"/>
</dbReference>
<dbReference type="GO" id="GO:0003729">
    <property type="term" value="F:mRNA binding"/>
    <property type="evidence" value="ECO:0007669"/>
    <property type="project" value="UniProtKB-UniRule"/>
</dbReference>
<dbReference type="GO" id="GO:0019843">
    <property type="term" value="F:rRNA binding"/>
    <property type="evidence" value="ECO:0007669"/>
    <property type="project" value="UniProtKB-UniRule"/>
</dbReference>
<dbReference type="GO" id="GO:0003735">
    <property type="term" value="F:structural constituent of ribosome"/>
    <property type="evidence" value="ECO:0007669"/>
    <property type="project" value="InterPro"/>
</dbReference>
<dbReference type="GO" id="GO:0006412">
    <property type="term" value="P:translation"/>
    <property type="evidence" value="ECO:0007669"/>
    <property type="project" value="UniProtKB-UniRule"/>
</dbReference>
<dbReference type="CDD" id="cd02412">
    <property type="entry name" value="KH-II_30S_S3"/>
    <property type="match status" value="1"/>
</dbReference>
<dbReference type="FunFam" id="3.30.1140.32:FF:000009">
    <property type="entry name" value="30S ribosomal protein S3"/>
    <property type="match status" value="1"/>
</dbReference>
<dbReference type="FunFam" id="3.30.300.20:FF:000001">
    <property type="entry name" value="30S ribosomal protein S3"/>
    <property type="match status" value="1"/>
</dbReference>
<dbReference type="Gene3D" id="3.30.300.20">
    <property type="match status" value="1"/>
</dbReference>
<dbReference type="Gene3D" id="3.30.1140.32">
    <property type="entry name" value="Ribosomal protein S3, C-terminal domain"/>
    <property type="match status" value="1"/>
</dbReference>
<dbReference type="HAMAP" id="MF_01309_B">
    <property type="entry name" value="Ribosomal_uS3_B"/>
    <property type="match status" value="1"/>
</dbReference>
<dbReference type="InterPro" id="IPR004087">
    <property type="entry name" value="KH_dom"/>
</dbReference>
<dbReference type="InterPro" id="IPR015946">
    <property type="entry name" value="KH_dom-like_a/b"/>
</dbReference>
<dbReference type="InterPro" id="IPR004044">
    <property type="entry name" value="KH_dom_type_2"/>
</dbReference>
<dbReference type="InterPro" id="IPR009019">
    <property type="entry name" value="KH_sf_prok-type"/>
</dbReference>
<dbReference type="InterPro" id="IPR036419">
    <property type="entry name" value="Ribosomal_S3_C_sf"/>
</dbReference>
<dbReference type="InterPro" id="IPR005704">
    <property type="entry name" value="Ribosomal_uS3_bac-typ"/>
</dbReference>
<dbReference type="InterPro" id="IPR001351">
    <property type="entry name" value="Ribosomal_uS3_C"/>
</dbReference>
<dbReference type="InterPro" id="IPR018280">
    <property type="entry name" value="Ribosomal_uS3_CS"/>
</dbReference>
<dbReference type="NCBIfam" id="TIGR01009">
    <property type="entry name" value="rpsC_bact"/>
    <property type="match status" value="1"/>
</dbReference>
<dbReference type="PANTHER" id="PTHR11760">
    <property type="entry name" value="30S/40S RIBOSOMAL PROTEIN S3"/>
    <property type="match status" value="1"/>
</dbReference>
<dbReference type="PANTHER" id="PTHR11760:SF19">
    <property type="entry name" value="SMALL RIBOSOMAL SUBUNIT PROTEIN US3C"/>
    <property type="match status" value="1"/>
</dbReference>
<dbReference type="Pfam" id="PF07650">
    <property type="entry name" value="KH_2"/>
    <property type="match status" value="1"/>
</dbReference>
<dbReference type="Pfam" id="PF00189">
    <property type="entry name" value="Ribosomal_S3_C"/>
    <property type="match status" value="1"/>
</dbReference>
<dbReference type="SMART" id="SM00322">
    <property type="entry name" value="KH"/>
    <property type="match status" value="1"/>
</dbReference>
<dbReference type="SUPFAM" id="SSF54814">
    <property type="entry name" value="Prokaryotic type KH domain (KH-domain type II)"/>
    <property type="match status" value="1"/>
</dbReference>
<dbReference type="SUPFAM" id="SSF54821">
    <property type="entry name" value="Ribosomal protein S3 C-terminal domain"/>
    <property type="match status" value="1"/>
</dbReference>
<dbReference type="PROSITE" id="PS50823">
    <property type="entry name" value="KH_TYPE_2"/>
    <property type="match status" value="1"/>
</dbReference>
<dbReference type="PROSITE" id="PS00548">
    <property type="entry name" value="RIBOSOMAL_S3"/>
    <property type="match status" value="1"/>
</dbReference>
<protein>
    <recommendedName>
        <fullName evidence="1">Small ribosomal subunit protein uS3</fullName>
    </recommendedName>
    <alternativeName>
        <fullName evidence="2">30S ribosomal protein S3</fullName>
    </alternativeName>
</protein>
<sequence>MGQKINPIGLRLGINRTWDSRWYAGKNEYGKLLHEDVKIREILHKELKQAAVARIVIERPHKKCRVTIHSARPGVVIGKKGADIDKLRKKVADITASDVVINIVEIRKPELDATLVAESIAQQLERRVAFRRAMKRAVQSAMRLGAEGIRINCSGRLGGAEIARMEWYREGRVPLHTLRADIDYGVATAFTTFGTCGVKVWIFKGEILEHDPMAQDKRMAEGDNSRPRRDAA</sequence>
<keyword id="KW-0687">Ribonucleoprotein</keyword>
<keyword id="KW-0689">Ribosomal protein</keyword>
<keyword id="KW-0694">RNA-binding</keyword>
<keyword id="KW-0699">rRNA-binding</keyword>
<comment type="function">
    <text evidence="1">Binds the lower part of the 30S subunit head. Binds mRNA in the 70S ribosome, positioning it for translation.</text>
</comment>
<comment type="subunit">
    <text evidence="1">Part of the 30S ribosomal subunit. Forms a tight complex with proteins S10 and S14.</text>
</comment>
<comment type="similarity">
    <text evidence="1">Belongs to the universal ribosomal protein uS3 family.</text>
</comment>
<feature type="chain" id="PRO_0000293869" description="Small ribosomal subunit protein uS3">
    <location>
        <begin position="1"/>
        <end position="232"/>
    </location>
</feature>
<feature type="domain" description="KH type-2" evidence="1">
    <location>
        <begin position="39"/>
        <end position="107"/>
    </location>
</feature>
<gene>
    <name evidence="1" type="primary">rpsC</name>
    <name type="ordered locus">RPC_3442</name>
</gene>
<proteinExistence type="inferred from homology"/>
<organism>
    <name type="scientific">Rhodopseudomonas palustris (strain BisB18)</name>
    <dbReference type="NCBI Taxonomy" id="316056"/>
    <lineage>
        <taxon>Bacteria</taxon>
        <taxon>Pseudomonadati</taxon>
        <taxon>Pseudomonadota</taxon>
        <taxon>Alphaproteobacteria</taxon>
        <taxon>Hyphomicrobiales</taxon>
        <taxon>Nitrobacteraceae</taxon>
        <taxon>Rhodopseudomonas</taxon>
    </lineage>
</organism>
<name>RS3_RHOPB</name>
<accession>Q211F4</accession>
<evidence type="ECO:0000255" key="1">
    <source>
        <dbReference type="HAMAP-Rule" id="MF_01309"/>
    </source>
</evidence>
<evidence type="ECO:0000305" key="2"/>
<reference key="1">
    <citation type="submission" date="2006-03" db="EMBL/GenBank/DDBJ databases">
        <title>Complete sequence of Rhodopseudomonas palustris BisB18.</title>
        <authorList>
            <consortium name="US DOE Joint Genome Institute"/>
            <person name="Copeland A."/>
            <person name="Lucas S."/>
            <person name="Lapidus A."/>
            <person name="Barry K."/>
            <person name="Detter J.C."/>
            <person name="Glavina del Rio T."/>
            <person name="Hammon N."/>
            <person name="Israni S."/>
            <person name="Dalin E."/>
            <person name="Tice H."/>
            <person name="Pitluck S."/>
            <person name="Chain P."/>
            <person name="Malfatti S."/>
            <person name="Shin M."/>
            <person name="Vergez L."/>
            <person name="Schmutz J."/>
            <person name="Larimer F."/>
            <person name="Land M."/>
            <person name="Hauser L."/>
            <person name="Pelletier D.A."/>
            <person name="Kyrpides N."/>
            <person name="Anderson I."/>
            <person name="Oda Y."/>
            <person name="Harwood C.S."/>
            <person name="Richardson P."/>
        </authorList>
    </citation>
    <scope>NUCLEOTIDE SEQUENCE [LARGE SCALE GENOMIC DNA]</scope>
    <source>
        <strain>BisB18</strain>
    </source>
</reference>